<accession>C1CMT3</accession>
<comment type="function">
    <text evidence="1">Specifically dimethylates two adjacent adenosines (A1518 and A1519) in the loop of a conserved hairpin near the 3'-end of 16S rRNA in the 30S particle. May play a critical role in biogenesis of 30S subunits.</text>
</comment>
<comment type="catalytic activity">
    <reaction evidence="1">
        <text>adenosine(1518)/adenosine(1519) in 16S rRNA + 4 S-adenosyl-L-methionine = N(6)-dimethyladenosine(1518)/N(6)-dimethyladenosine(1519) in 16S rRNA + 4 S-adenosyl-L-homocysteine + 4 H(+)</text>
        <dbReference type="Rhea" id="RHEA:19609"/>
        <dbReference type="Rhea" id="RHEA-COMP:10232"/>
        <dbReference type="Rhea" id="RHEA-COMP:10233"/>
        <dbReference type="ChEBI" id="CHEBI:15378"/>
        <dbReference type="ChEBI" id="CHEBI:57856"/>
        <dbReference type="ChEBI" id="CHEBI:59789"/>
        <dbReference type="ChEBI" id="CHEBI:74411"/>
        <dbReference type="ChEBI" id="CHEBI:74493"/>
        <dbReference type="EC" id="2.1.1.182"/>
    </reaction>
</comment>
<comment type="subcellular location">
    <subcellularLocation>
        <location evidence="1">Cytoplasm</location>
    </subcellularLocation>
</comment>
<comment type="similarity">
    <text evidence="1">Belongs to the class I-like SAM-binding methyltransferase superfamily. rRNA adenine N(6)-methyltransferase family. RsmA subfamily.</text>
</comment>
<organism>
    <name type="scientific">Streptococcus pneumoniae (strain P1031)</name>
    <dbReference type="NCBI Taxonomy" id="488223"/>
    <lineage>
        <taxon>Bacteria</taxon>
        <taxon>Bacillati</taxon>
        <taxon>Bacillota</taxon>
        <taxon>Bacilli</taxon>
        <taxon>Lactobacillales</taxon>
        <taxon>Streptococcaceae</taxon>
        <taxon>Streptococcus</taxon>
    </lineage>
</organism>
<protein>
    <recommendedName>
        <fullName evidence="1">Ribosomal RNA small subunit methyltransferase A</fullName>
        <ecNumber evidence="1">2.1.1.182</ecNumber>
    </recommendedName>
    <alternativeName>
        <fullName evidence="1">16S rRNA (adenine(1518)-N(6)/adenine(1519)-N(6))-dimethyltransferase</fullName>
    </alternativeName>
    <alternativeName>
        <fullName evidence="1">16S rRNA dimethyladenosine transferase</fullName>
    </alternativeName>
    <alternativeName>
        <fullName evidence="1">16S rRNA dimethylase</fullName>
    </alternativeName>
    <alternativeName>
        <fullName evidence="1">S-adenosylmethionine-6-N', N'-adenosyl(rRNA) dimethyltransferase</fullName>
    </alternativeName>
</protein>
<gene>
    <name evidence="1" type="primary">rsmA</name>
    <name evidence="1" type="synonym">ksgA</name>
    <name type="ordered locus">SPP_2007</name>
</gene>
<feature type="chain" id="PRO_1000147155" description="Ribosomal RNA small subunit methyltransferase A">
    <location>
        <begin position="1"/>
        <end position="290"/>
    </location>
</feature>
<feature type="binding site" evidence="1">
    <location>
        <position position="27"/>
    </location>
    <ligand>
        <name>S-adenosyl-L-methionine</name>
        <dbReference type="ChEBI" id="CHEBI:59789"/>
    </ligand>
</feature>
<feature type="binding site" evidence="1">
    <location>
        <position position="29"/>
    </location>
    <ligand>
        <name>S-adenosyl-L-methionine</name>
        <dbReference type="ChEBI" id="CHEBI:59789"/>
    </ligand>
</feature>
<feature type="binding site" evidence="1">
    <location>
        <position position="54"/>
    </location>
    <ligand>
        <name>S-adenosyl-L-methionine</name>
        <dbReference type="ChEBI" id="CHEBI:59789"/>
    </ligand>
</feature>
<feature type="binding site" evidence="1">
    <location>
        <position position="75"/>
    </location>
    <ligand>
        <name>S-adenosyl-L-methionine</name>
        <dbReference type="ChEBI" id="CHEBI:59789"/>
    </ligand>
</feature>
<feature type="binding site" evidence="1">
    <location>
        <position position="100"/>
    </location>
    <ligand>
        <name>S-adenosyl-L-methionine</name>
        <dbReference type="ChEBI" id="CHEBI:59789"/>
    </ligand>
</feature>
<feature type="binding site" evidence="1">
    <location>
        <position position="125"/>
    </location>
    <ligand>
        <name>S-adenosyl-L-methionine</name>
        <dbReference type="ChEBI" id="CHEBI:59789"/>
    </ligand>
</feature>
<reference key="1">
    <citation type="journal article" date="2010" name="Genome Biol.">
        <title>Structure and dynamics of the pan-genome of Streptococcus pneumoniae and closely related species.</title>
        <authorList>
            <person name="Donati C."/>
            <person name="Hiller N.L."/>
            <person name="Tettelin H."/>
            <person name="Muzzi A."/>
            <person name="Croucher N.J."/>
            <person name="Angiuoli S.V."/>
            <person name="Oggioni M."/>
            <person name="Dunning Hotopp J.C."/>
            <person name="Hu F.Z."/>
            <person name="Riley D.R."/>
            <person name="Covacci A."/>
            <person name="Mitchell T.J."/>
            <person name="Bentley S.D."/>
            <person name="Kilian M."/>
            <person name="Ehrlich G.D."/>
            <person name="Rappuoli R."/>
            <person name="Moxon E.R."/>
            <person name="Masignani V."/>
        </authorList>
    </citation>
    <scope>NUCLEOTIDE SEQUENCE [LARGE SCALE GENOMIC DNA]</scope>
    <source>
        <strain>P1031</strain>
    </source>
</reference>
<name>RSMA_STRZP</name>
<evidence type="ECO:0000255" key="1">
    <source>
        <dbReference type="HAMAP-Rule" id="MF_00607"/>
    </source>
</evidence>
<proteinExistence type="inferred from homology"/>
<sequence>MRIADYSVTKAVLERHGFTFKKSFGQNFLTDTNILQKIVDTAEIDDQVNVIEIGPGIGALTEFLAERAAEVMAFEIDHRLVPILADTLRDFDNVTVVNEDILKVDLAQHIQNFKNPDLPIKVVANLPYYITTPILMHLIESGIPFSEFVVMMQKEVADRISAQPNTKAYGSLSIAVQYYMTAKVAFIVPRTVFVPAPNVDSAILKMVRRPVPAVAVEDENFFFKVSKASFTHRRKTLWNNLTGYFGKTEEVKDKLTKALDQAGLSPSVRGEALSLEEFASLADALKGQGL</sequence>
<dbReference type="EC" id="2.1.1.182" evidence="1"/>
<dbReference type="EMBL" id="CP000920">
    <property type="protein sequence ID" value="ACO21814.1"/>
    <property type="molecule type" value="Genomic_DNA"/>
</dbReference>
<dbReference type="RefSeq" id="WP_001216845.1">
    <property type="nucleotide sequence ID" value="NC_012467.1"/>
</dbReference>
<dbReference type="SMR" id="C1CMT3"/>
<dbReference type="GeneID" id="45652803"/>
<dbReference type="KEGG" id="spp:SPP_2007"/>
<dbReference type="HOGENOM" id="CLU_041220_0_0_9"/>
<dbReference type="GO" id="GO:0005829">
    <property type="term" value="C:cytosol"/>
    <property type="evidence" value="ECO:0007669"/>
    <property type="project" value="TreeGrafter"/>
</dbReference>
<dbReference type="GO" id="GO:0052908">
    <property type="term" value="F:16S rRNA (adenine(1518)-N(6)/adenine(1519)-N(6))-dimethyltransferase activity"/>
    <property type="evidence" value="ECO:0007669"/>
    <property type="project" value="UniProtKB-EC"/>
</dbReference>
<dbReference type="GO" id="GO:0003723">
    <property type="term" value="F:RNA binding"/>
    <property type="evidence" value="ECO:0007669"/>
    <property type="project" value="UniProtKB-KW"/>
</dbReference>
<dbReference type="CDD" id="cd02440">
    <property type="entry name" value="AdoMet_MTases"/>
    <property type="match status" value="1"/>
</dbReference>
<dbReference type="FunFam" id="1.10.8.100:FF:000005">
    <property type="entry name" value="Ribosomal RNA small subunit methyltransferase A"/>
    <property type="match status" value="1"/>
</dbReference>
<dbReference type="FunFam" id="3.40.50.150:FF:000023">
    <property type="entry name" value="Ribosomal RNA small subunit methyltransferase A"/>
    <property type="match status" value="1"/>
</dbReference>
<dbReference type="Gene3D" id="1.10.8.100">
    <property type="entry name" value="Ribosomal RNA adenine dimethylase-like, domain 2"/>
    <property type="match status" value="1"/>
</dbReference>
<dbReference type="Gene3D" id="3.40.50.150">
    <property type="entry name" value="Vaccinia Virus protein VP39"/>
    <property type="match status" value="1"/>
</dbReference>
<dbReference type="HAMAP" id="MF_00607">
    <property type="entry name" value="16SrRNA_methyltr_A"/>
    <property type="match status" value="1"/>
</dbReference>
<dbReference type="InterPro" id="IPR001737">
    <property type="entry name" value="KsgA/Erm"/>
</dbReference>
<dbReference type="InterPro" id="IPR023165">
    <property type="entry name" value="rRNA_Ade_diMease-like_C"/>
</dbReference>
<dbReference type="InterPro" id="IPR020596">
    <property type="entry name" value="rRNA_Ade_Mease_Trfase_CS"/>
</dbReference>
<dbReference type="InterPro" id="IPR020598">
    <property type="entry name" value="rRNA_Ade_methylase_Trfase_N"/>
</dbReference>
<dbReference type="InterPro" id="IPR011530">
    <property type="entry name" value="rRNA_adenine_dimethylase"/>
</dbReference>
<dbReference type="InterPro" id="IPR029063">
    <property type="entry name" value="SAM-dependent_MTases_sf"/>
</dbReference>
<dbReference type="NCBIfam" id="TIGR00755">
    <property type="entry name" value="ksgA"/>
    <property type="match status" value="1"/>
</dbReference>
<dbReference type="PANTHER" id="PTHR11727">
    <property type="entry name" value="DIMETHYLADENOSINE TRANSFERASE"/>
    <property type="match status" value="1"/>
</dbReference>
<dbReference type="PANTHER" id="PTHR11727:SF7">
    <property type="entry name" value="DIMETHYLADENOSINE TRANSFERASE-RELATED"/>
    <property type="match status" value="1"/>
</dbReference>
<dbReference type="Pfam" id="PF00398">
    <property type="entry name" value="RrnaAD"/>
    <property type="match status" value="1"/>
</dbReference>
<dbReference type="SMART" id="SM00650">
    <property type="entry name" value="rADc"/>
    <property type="match status" value="1"/>
</dbReference>
<dbReference type="SUPFAM" id="SSF53335">
    <property type="entry name" value="S-adenosyl-L-methionine-dependent methyltransferases"/>
    <property type="match status" value="1"/>
</dbReference>
<dbReference type="PROSITE" id="PS01131">
    <property type="entry name" value="RRNA_A_DIMETH"/>
    <property type="match status" value="1"/>
</dbReference>
<dbReference type="PROSITE" id="PS51689">
    <property type="entry name" value="SAM_RNA_A_N6_MT"/>
    <property type="match status" value="1"/>
</dbReference>
<keyword id="KW-0963">Cytoplasm</keyword>
<keyword id="KW-0489">Methyltransferase</keyword>
<keyword id="KW-0694">RNA-binding</keyword>
<keyword id="KW-0698">rRNA processing</keyword>
<keyword id="KW-0949">S-adenosyl-L-methionine</keyword>
<keyword id="KW-0808">Transferase</keyword>